<feature type="chain" id="PRO_0000372633" description="Large ribosomal subunit protein mL43">
    <location>
        <begin position="1"/>
        <end position="145"/>
    </location>
</feature>
<sequence>MMIEIIPKISIPKNGLGSFTRPCRRIEFSYCNWGGSSKGMKEFLSTKLESLAKESQDVEFHVTNRQGKHPLIRAYYNTGREKVICTRKMSASSIFQKAILCRDSDGLKPRLIKYPVESTNPSVRGIWSPFSDQAKPHEIYKKKSP</sequence>
<organism>
    <name type="scientific">Schizosaccharomyces pombe (strain 972 / ATCC 24843)</name>
    <name type="common">Fission yeast</name>
    <dbReference type="NCBI Taxonomy" id="284812"/>
    <lineage>
        <taxon>Eukaryota</taxon>
        <taxon>Fungi</taxon>
        <taxon>Dikarya</taxon>
        <taxon>Ascomycota</taxon>
        <taxon>Taphrinomycotina</taxon>
        <taxon>Schizosaccharomycetes</taxon>
        <taxon>Schizosaccharomycetales</taxon>
        <taxon>Schizosaccharomycetaceae</taxon>
        <taxon>Schizosaccharomyces</taxon>
    </lineage>
</organism>
<comment type="function">
    <text evidence="1">Component of the mitochondrial ribosome (mitoribosome), a dedicated translation machinery responsible for the synthesis of mitochondrial genome-encoded proteins, including at least some of the essential transmembrane subunits of the mitochondrial respiratory chain. The mitoribosomes are attached to the mitochondrial inner membrane and translation products are cotranslationally integrated into the membrane. Also has an extraribosomal function, being essential for mitochondrial genome integrity. May interact with MHR1 to take part in the mtDNA repair mechanism.</text>
</comment>
<comment type="subunit">
    <text evidence="1">Component of the mitochondrial large ribosomal subunit (mt-LSU). Mature yeast 74S mitochondrial ribosomes consist of a small (37S) and a large (54S) subunit. The 37S small subunit contains a 15S ribosomal RNA (15S mt-rRNA) and at least 32 different proteins. The 54S large subunit contains a 21S rRNA (21S mt-rRNA) and at least 45 different proteins.</text>
</comment>
<comment type="subcellular location">
    <subcellularLocation>
        <location evidence="2">Mitochondrion</location>
    </subcellularLocation>
</comment>
<comment type="similarity">
    <text evidence="3">Belongs to the mitochondrion-specific ribosomal protein mL43 family.</text>
</comment>
<reference key="1">
    <citation type="journal article" date="2002" name="Nature">
        <title>The genome sequence of Schizosaccharomyces pombe.</title>
        <authorList>
            <person name="Wood V."/>
            <person name="Gwilliam R."/>
            <person name="Rajandream M.A."/>
            <person name="Lyne M.H."/>
            <person name="Lyne R."/>
            <person name="Stewart A."/>
            <person name="Sgouros J.G."/>
            <person name="Peat N."/>
            <person name="Hayles J."/>
            <person name="Baker S.G."/>
            <person name="Basham D."/>
            <person name="Bowman S."/>
            <person name="Brooks K."/>
            <person name="Brown D."/>
            <person name="Brown S."/>
            <person name="Chillingworth T."/>
            <person name="Churcher C.M."/>
            <person name="Collins M."/>
            <person name="Connor R."/>
            <person name="Cronin A."/>
            <person name="Davis P."/>
            <person name="Feltwell T."/>
            <person name="Fraser A."/>
            <person name="Gentles S."/>
            <person name="Goble A."/>
            <person name="Hamlin N."/>
            <person name="Harris D.E."/>
            <person name="Hidalgo J."/>
            <person name="Hodgson G."/>
            <person name="Holroyd S."/>
            <person name="Hornsby T."/>
            <person name="Howarth S."/>
            <person name="Huckle E.J."/>
            <person name="Hunt S."/>
            <person name="Jagels K."/>
            <person name="James K.D."/>
            <person name="Jones L."/>
            <person name="Jones M."/>
            <person name="Leather S."/>
            <person name="McDonald S."/>
            <person name="McLean J."/>
            <person name="Mooney P."/>
            <person name="Moule S."/>
            <person name="Mungall K.L."/>
            <person name="Murphy L.D."/>
            <person name="Niblett D."/>
            <person name="Odell C."/>
            <person name="Oliver K."/>
            <person name="O'Neil S."/>
            <person name="Pearson D."/>
            <person name="Quail M.A."/>
            <person name="Rabbinowitsch E."/>
            <person name="Rutherford K.M."/>
            <person name="Rutter S."/>
            <person name="Saunders D."/>
            <person name="Seeger K."/>
            <person name="Sharp S."/>
            <person name="Skelton J."/>
            <person name="Simmonds M.N."/>
            <person name="Squares R."/>
            <person name="Squares S."/>
            <person name="Stevens K."/>
            <person name="Taylor K."/>
            <person name="Taylor R.G."/>
            <person name="Tivey A."/>
            <person name="Walsh S.V."/>
            <person name="Warren T."/>
            <person name="Whitehead S."/>
            <person name="Woodward J.R."/>
            <person name="Volckaert G."/>
            <person name="Aert R."/>
            <person name="Robben J."/>
            <person name="Grymonprez B."/>
            <person name="Weltjens I."/>
            <person name="Vanstreels E."/>
            <person name="Rieger M."/>
            <person name="Schaefer M."/>
            <person name="Mueller-Auer S."/>
            <person name="Gabel C."/>
            <person name="Fuchs M."/>
            <person name="Duesterhoeft A."/>
            <person name="Fritzc C."/>
            <person name="Holzer E."/>
            <person name="Moestl D."/>
            <person name="Hilbert H."/>
            <person name="Borzym K."/>
            <person name="Langer I."/>
            <person name="Beck A."/>
            <person name="Lehrach H."/>
            <person name="Reinhardt R."/>
            <person name="Pohl T.M."/>
            <person name="Eger P."/>
            <person name="Zimmermann W."/>
            <person name="Wedler H."/>
            <person name="Wambutt R."/>
            <person name="Purnelle B."/>
            <person name="Goffeau A."/>
            <person name="Cadieu E."/>
            <person name="Dreano S."/>
            <person name="Gloux S."/>
            <person name="Lelaure V."/>
            <person name="Mottier S."/>
            <person name="Galibert F."/>
            <person name="Aves S.J."/>
            <person name="Xiang Z."/>
            <person name="Hunt C."/>
            <person name="Moore K."/>
            <person name="Hurst S.M."/>
            <person name="Lucas M."/>
            <person name="Rochet M."/>
            <person name="Gaillardin C."/>
            <person name="Tallada V.A."/>
            <person name="Garzon A."/>
            <person name="Thode G."/>
            <person name="Daga R.R."/>
            <person name="Cruzado L."/>
            <person name="Jimenez J."/>
            <person name="Sanchez M."/>
            <person name="del Rey F."/>
            <person name="Benito J."/>
            <person name="Dominguez A."/>
            <person name="Revuelta J.L."/>
            <person name="Moreno S."/>
            <person name="Armstrong J."/>
            <person name="Forsburg S.L."/>
            <person name="Cerutti L."/>
            <person name="Lowe T."/>
            <person name="McCombie W.R."/>
            <person name="Paulsen I."/>
            <person name="Potashkin J."/>
            <person name="Shpakovski G.V."/>
            <person name="Ussery D."/>
            <person name="Barrell B.G."/>
            <person name="Nurse P."/>
        </authorList>
    </citation>
    <scope>NUCLEOTIDE SEQUENCE [LARGE SCALE GENOMIC DNA]</scope>
    <source>
        <strain>972 / ATCC 24843</strain>
    </source>
</reference>
<reference key="2">
    <citation type="journal article" date="2006" name="Nat. Biotechnol.">
        <title>ORFeome cloning and global analysis of protein localization in the fission yeast Schizosaccharomyces pombe.</title>
        <authorList>
            <person name="Matsuyama A."/>
            <person name="Arai R."/>
            <person name="Yashiroda Y."/>
            <person name="Shirai A."/>
            <person name="Kamata A."/>
            <person name="Sekido S."/>
            <person name="Kobayashi Y."/>
            <person name="Hashimoto A."/>
            <person name="Hamamoto M."/>
            <person name="Hiraoka Y."/>
            <person name="Horinouchi S."/>
            <person name="Yoshida M."/>
        </authorList>
    </citation>
    <scope>SUBCELLULAR LOCATION [LARGE SCALE ANALYSIS]</scope>
</reference>
<protein>
    <recommendedName>
        <fullName evidence="3">Large ribosomal subunit protein mL43</fullName>
    </recommendedName>
    <alternativeName>
        <fullName>54S ribosomal protein L51, mitochondrial</fullName>
    </alternativeName>
</protein>
<gene>
    <name type="primary">mrpl51</name>
    <name type="ORF">SPBC19C2.12</name>
</gene>
<proteinExistence type="inferred from homology"/>
<dbReference type="EMBL" id="CU329671">
    <property type="protein sequence ID" value="CAB52039.1"/>
    <property type="molecule type" value="Genomic_DNA"/>
</dbReference>
<dbReference type="PIR" id="T39803">
    <property type="entry name" value="T39803"/>
</dbReference>
<dbReference type="RefSeq" id="NP_595697.1">
    <property type="nucleotide sequence ID" value="NM_001021594.2"/>
</dbReference>
<dbReference type="SMR" id="Q9UUC8"/>
<dbReference type="ComplexPortal" id="CPX-10323">
    <property type="entry name" value="54S mitochondrial large ribosomal subunit"/>
</dbReference>
<dbReference type="FunCoup" id="Q9UUC8">
    <property type="interactions" value="180"/>
</dbReference>
<dbReference type="STRING" id="284812.Q9UUC8"/>
<dbReference type="iPTMnet" id="Q9UUC8"/>
<dbReference type="PaxDb" id="4896-SPBC19C2.12.1"/>
<dbReference type="EnsemblFungi" id="SPBC19C2.12.1">
    <property type="protein sequence ID" value="SPBC19C2.12.1:pep"/>
    <property type="gene ID" value="SPBC19C2.12"/>
</dbReference>
<dbReference type="GeneID" id="2540785"/>
<dbReference type="KEGG" id="spo:2540785"/>
<dbReference type="PomBase" id="SPBC19C2.12">
    <property type="gene designation" value="mrpl51"/>
</dbReference>
<dbReference type="VEuPathDB" id="FungiDB:SPBC19C2.12"/>
<dbReference type="eggNOG" id="KOG3445">
    <property type="taxonomic scope" value="Eukaryota"/>
</dbReference>
<dbReference type="HOGENOM" id="CLU_117700_1_1_1"/>
<dbReference type="InParanoid" id="Q9UUC8"/>
<dbReference type="OMA" id="WPSSANT"/>
<dbReference type="PhylomeDB" id="Q9UUC8"/>
<dbReference type="PRO" id="PR:Q9UUC8"/>
<dbReference type="Proteomes" id="UP000002485">
    <property type="component" value="Chromosome II"/>
</dbReference>
<dbReference type="GO" id="GO:0005762">
    <property type="term" value="C:mitochondrial large ribosomal subunit"/>
    <property type="evidence" value="ECO:0000318"/>
    <property type="project" value="GO_Central"/>
</dbReference>
<dbReference type="GO" id="GO:0005739">
    <property type="term" value="C:mitochondrion"/>
    <property type="evidence" value="ECO:0007005"/>
    <property type="project" value="PomBase"/>
</dbReference>
<dbReference type="GO" id="GO:0003735">
    <property type="term" value="F:structural constituent of ribosome"/>
    <property type="evidence" value="ECO:0000318"/>
    <property type="project" value="GO_Central"/>
</dbReference>
<dbReference type="GO" id="GO:0032543">
    <property type="term" value="P:mitochondrial translation"/>
    <property type="evidence" value="ECO:0000250"/>
    <property type="project" value="PomBase"/>
</dbReference>
<dbReference type="FunFam" id="3.40.30.10:FF:000173">
    <property type="entry name" value="Mitochondrial 54S ribosomal protein"/>
    <property type="match status" value="1"/>
</dbReference>
<dbReference type="Gene3D" id="3.40.30.10">
    <property type="entry name" value="Glutaredoxin"/>
    <property type="match status" value="1"/>
</dbReference>
<dbReference type="InterPro" id="IPR039927">
    <property type="entry name" value="Ribosomal_mL43"/>
</dbReference>
<dbReference type="InterPro" id="IPR007741">
    <property type="entry name" value="Ribosomal_mL43/mS25/NADH_DH"/>
</dbReference>
<dbReference type="InterPro" id="IPR036249">
    <property type="entry name" value="Thioredoxin-like_sf"/>
</dbReference>
<dbReference type="PANTHER" id="PTHR21396">
    <property type="entry name" value="39S RIBOSOMAL PROTEIN L43"/>
    <property type="match status" value="1"/>
</dbReference>
<dbReference type="PANTHER" id="PTHR21396:SF2">
    <property type="entry name" value="LARGE RIBOSOMAL SUBUNIT PROTEIN ML43"/>
    <property type="match status" value="1"/>
</dbReference>
<dbReference type="Pfam" id="PF05047">
    <property type="entry name" value="L51_S25_CI-B8"/>
    <property type="match status" value="1"/>
</dbReference>
<dbReference type="SMART" id="SM00916">
    <property type="entry name" value="L51_S25_CI-B8"/>
    <property type="match status" value="1"/>
</dbReference>
<dbReference type="SUPFAM" id="SSF52833">
    <property type="entry name" value="Thioredoxin-like"/>
    <property type="match status" value="1"/>
</dbReference>
<keyword id="KW-0496">Mitochondrion</keyword>
<keyword id="KW-1185">Reference proteome</keyword>
<keyword id="KW-0687">Ribonucleoprotein</keyword>
<keyword id="KW-0689">Ribosomal protein</keyword>
<name>RM51_SCHPO</name>
<evidence type="ECO:0000250" key="1">
    <source>
        <dbReference type="UniProtKB" id="Q06090"/>
    </source>
</evidence>
<evidence type="ECO:0000269" key="2">
    <source>
    </source>
</evidence>
<evidence type="ECO:0000305" key="3"/>
<accession>Q9UUC8</accession>